<gene>
    <name evidence="1" type="primary">gatB</name>
    <name type="ordered locus">OTBS_1368</name>
</gene>
<reference key="1">
    <citation type="journal article" date="2007" name="Proc. Natl. Acad. Sci. U.S.A.">
        <title>The Orientia tsutsugamushi genome reveals massive proliferation of conjugative type IV secretion system and host-cell interaction genes.</title>
        <authorList>
            <person name="Cho N.-H."/>
            <person name="Kim H.-R."/>
            <person name="Lee J.-H."/>
            <person name="Kim S.-Y."/>
            <person name="Kim J."/>
            <person name="Cha S."/>
            <person name="Kim S.-Y."/>
            <person name="Darby A.C."/>
            <person name="Fuxelius H.-H."/>
            <person name="Yin J."/>
            <person name="Kim J.H."/>
            <person name="Kim J."/>
            <person name="Lee S.J."/>
            <person name="Koh Y.-S."/>
            <person name="Jang W.-J."/>
            <person name="Park K.-H."/>
            <person name="Andersson S.G.E."/>
            <person name="Choi M.-S."/>
            <person name="Kim I.-S."/>
        </authorList>
    </citation>
    <scope>NUCLEOTIDE SEQUENCE [LARGE SCALE GENOMIC DNA]</scope>
    <source>
        <strain>Boryong</strain>
    </source>
</reference>
<dbReference type="EC" id="6.3.5.-" evidence="1"/>
<dbReference type="EMBL" id="AM494475">
    <property type="protein sequence ID" value="CAM80434.1"/>
    <property type="molecule type" value="Genomic_DNA"/>
</dbReference>
<dbReference type="RefSeq" id="WP_011944873.1">
    <property type="nucleotide sequence ID" value="NC_009488.1"/>
</dbReference>
<dbReference type="SMR" id="A5CEC9"/>
<dbReference type="KEGG" id="ots:OTBS_1368"/>
<dbReference type="eggNOG" id="COG0064">
    <property type="taxonomic scope" value="Bacteria"/>
</dbReference>
<dbReference type="HOGENOM" id="CLU_019240_1_1_5"/>
<dbReference type="Proteomes" id="UP000001565">
    <property type="component" value="Chromosome"/>
</dbReference>
<dbReference type="GO" id="GO:0030956">
    <property type="term" value="C:glutamyl-tRNA(Gln) amidotransferase complex"/>
    <property type="evidence" value="ECO:0007669"/>
    <property type="project" value="TreeGrafter"/>
</dbReference>
<dbReference type="GO" id="GO:0050566">
    <property type="term" value="F:asparaginyl-tRNA synthase (glutamine-hydrolyzing) activity"/>
    <property type="evidence" value="ECO:0007669"/>
    <property type="project" value="RHEA"/>
</dbReference>
<dbReference type="GO" id="GO:0005524">
    <property type="term" value="F:ATP binding"/>
    <property type="evidence" value="ECO:0007669"/>
    <property type="project" value="UniProtKB-KW"/>
</dbReference>
<dbReference type="GO" id="GO:0050567">
    <property type="term" value="F:glutaminyl-tRNA synthase (glutamine-hydrolyzing) activity"/>
    <property type="evidence" value="ECO:0007669"/>
    <property type="project" value="UniProtKB-UniRule"/>
</dbReference>
<dbReference type="GO" id="GO:0070681">
    <property type="term" value="P:glutaminyl-tRNAGln biosynthesis via transamidation"/>
    <property type="evidence" value="ECO:0007669"/>
    <property type="project" value="TreeGrafter"/>
</dbReference>
<dbReference type="GO" id="GO:0006412">
    <property type="term" value="P:translation"/>
    <property type="evidence" value="ECO:0007669"/>
    <property type="project" value="UniProtKB-UniRule"/>
</dbReference>
<dbReference type="FunFam" id="1.10.10.410:FF:000001">
    <property type="entry name" value="Aspartyl/glutamyl-tRNA(Asn/Gln) amidotransferase subunit B"/>
    <property type="match status" value="1"/>
</dbReference>
<dbReference type="Gene3D" id="1.10.10.410">
    <property type="match status" value="1"/>
</dbReference>
<dbReference type="Gene3D" id="1.10.150.380">
    <property type="entry name" value="GatB domain, N-terminal subdomain"/>
    <property type="match status" value="1"/>
</dbReference>
<dbReference type="HAMAP" id="MF_00121">
    <property type="entry name" value="GatB"/>
    <property type="match status" value="1"/>
</dbReference>
<dbReference type="InterPro" id="IPR017959">
    <property type="entry name" value="Asn/Gln-tRNA_amidoTrfase_suB/E"/>
</dbReference>
<dbReference type="InterPro" id="IPR006075">
    <property type="entry name" value="Asn/Gln-tRNA_Trfase_suB/E_cat"/>
</dbReference>
<dbReference type="InterPro" id="IPR018027">
    <property type="entry name" value="Asn/Gln_amidotransferase"/>
</dbReference>
<dbReference type="InterPro" id="IPR003789">
    <property type="entry name" value="Asn/Gln_tRNA_amidoTrase-B-like"/>
</dbReference>
<dbReference type="InterPro" id="IPR004413">
    <property type="entry name" value="GatB"/>
</dbReference>
<dbReference type="InterPro" id="IPR042114">
    <property type="entry name" value="GatB_C_1"/>
</dbReference>
<dbReference type="InterPro" id="IPR023168">
    <property type="entry name" value="GatB_Yqey_C_2"/>
</dbReference>
<dbReference type="InterPro" id="IPR017958">
    <property type="entry name" value="Gln-tRNA_amidoTrfase_suB_CS"/>
</dbReference>
<dbReference type="InterPro" id="IPR014746">
    <property type="entry name" value="Gln_synth/guanido_kin_cat_dom"/>
</dbReference>
<dbReference type="NCBIfam" id="TIGR00133">
    <property type="entry name" value="gatB"/>
    <property type="match status" value="1"/>
</dbReference>
<dbReference type="NCBIfam" id="NF004012">
    <property type="entry name" value="PRK05477.1-2"/>
    <property type="match status" value="1"/>
</dbReference>
<dbReference type="NCBIfam" id="NF004014">
    <property type="entry name" value="PRK05477.1-4"/>
    <property type="match status" value="1"/>
</dbReference>
<dbReference type="NCBIfam" id="NF004015">
    <property type="entry name" value="PRK05477.1-5"/>
    <property type="match status" value="1"/>
</dbReference>
<dbReference type="PANTHER" id="PTHR11659">
    <property type="entry name" value="GLUTAMYL-TRNA GLN AMIDOTRANSFERASE SUBUNIT B MITOCHONDRIAL AND PROKARYOTIC PET112-RELATED"/>
    <property type="match status" value="1"/>
</dbReference>
<dbReference type="PANTHER" id="PTHR11659:SF0">
    <property type="entry name" value="GLUTAMYL-TRNA(GLN) AMIDOTRANSFERASE SUBUNIT B, MITOCHONDRIAL"/>
    <property type="match status" value="1"/>
</dbReference>
<dbReference type="Pfam" id="PF02934">
    <property type="entry name" value="GatB_N"/>
    <property type="match status" value="1"/>
</dbReference>
<dbReference type="Pfam" id="PF02637">
    <property type="entry name" value="GatB_Yqey"/>
    <property type="match status" value="1"/>
</dbReference>
<dbReference type="SMART" id="SM00845">
    <property type="entry name" value="GatB_Yqey"/>
    <property type="match status" value="1"/>
</dbReference>
<dbReference type="SUPFAM" id="SSF89095">
    <property type="entry name" value="GatB/YqeY motif"/>
    <property type="match status" value="1"/>
</dbReference>
<dbReference type="SUPFAM" id="SSF55931">
    <property type="entry name" value="Glutamine synthetase/guanido kinase"/>
    <property type="match status" value="1"/>
</dbReference>
<dbReference type="PROSITE" id="PS01234">
    <property type="entry name" value="GATB"/>
    <property type="match status" value="1"/>
</dbReference>
<evidence type="ECO:0000255" key="1">
    <source>
        <dbReference type="HAMAP-Rule" id="MF_00121"/>
    </source>
</evidence>
<sequence length="486" mass="54428">MTFIEGKTEKWEYVIGLEIHAQIKSNAKLFSSASTEFGSSPNSQVELLDAAMPGSLPVLNEFCVHQAIKTALGINAKINKLSIFDRKNYFYADLPAGYQISQFYHPIAQGGWIEILDENGNIKCIQINRLHIEQDTGKSTHDQSDTYSYIDLNRSGIALMEIVSEPDISSPMQAAEYIKKLRAILRYLDSCNGDMEKGALRCDANISVRKPNSELGTKCEIKNLNSIKSIVRALEFEGQRQVNILESGGTVKQESLLFDATLGKTFPMRSKENATDYRYFPDPDLPPIILDQSLIDNIASSLPELPDAKITRYVNEIKLSDYNAQVLAADKDISCFFEEVIKTANPILTANWILSELFGLMNKDGITINECKITANHFSELIQLISSKAISSKIAKTVLKEMFDSGKSPKIIMQEKNIQQISDPNQIADIIDDVLKDNYQSVVSYRNGKDRLFGFFVGQVMKKTAGNANPELINEILHTKLKQFQI</sequence>
<organism>
    <name type="scientific">Orientia tsutsugamushi (strain Boryong)</name>
    <name type="common">Rickettsia tsutsugamushi</name>
    <dbReference type="NCBI Taxonomy" id="357244"/>
    <lineage>
        <taxon>Bacteria</taxon>
        <taxon>Pseudomonadati</taxon>
        <taxon>Pseudomonadota</taxon>
        <taxon>Alphaproteobacteria</taxon>
        <taxon>Rickettsiales</taxon>
        <taxon>Rickettsiaceae</taxon>
        <taxon>Rickettsieae</taxon>
        <taxon>Orientia</taxon>
    </lineage>
</organism>
<accession>A5CEC9</accession>
<comment type="function">
    <text evidence="1">Allows the formation of correctly charged Asn-tRNA(Asn) or Gln-tRNA(Gln) through the transamidation of misacylated Asp-tRNA(Asn) or Glu-tRNA(Gln) in organisms which lack either or both of asparaginyl-tRNA or glutaminyl-tRNA synthetases. The reaction takes place in the presence of glutamine and ATP through an activated phospho-Asp-tRNA(Asn) or phospho-Glu-tRNA(Gln).</text>
</comment>
<comment type="catalytic activity">
    <reaction evidence="1">
        <text>L-glutamyl-tRNA(Gln) + L-glutamine + ATP + H2O = L-glutaminyl-tRNA(Gln) + L-glutamate + ADP + phosphate + H(+)</text>
        <dbReference type="Rhea" id="RHEA:17521"/>
        <dbReference type="Rhea" id="RHEA-COMP:9681"/>
        <dbReference type="Rhea" id="RHEA-COMP:9684"/>
        <dbReference type="ChEBI" id="CHEBI:15377"/>
        <dbReference type="ChEBI" id="CHEBI:15378"/>
        <dbReference type="ChEBI" id="CHEBI:29985"/>
        <dbReference type="ChEBI" id="CHEBI:30616"/>
        <dbReference type="ChEBI" id="CHEBI:43474"/>
        <dbReference type="ChEBI" id="CHEBI:58359"/>
        <dbReference type="ChEBI" id="CHEBI:78520"/>
        <dbReference type="ChEBI" id="CHEBI:78521"/>
        <dbReference type="ChEBI" id="CHEBI:456216"/>
    </reaction>
</comment>
<comment type="catalytic activity">
    <reaction evidence="1">
        <text>L-aspartyl-tRNA(Asn) + L-glutamine + ATP + H2O = L-asparaginyl-tRNA(Asn) + L-glutamate + ADP + phosphate + 2 H(+)</text>
        <dbReference type="Rhea" id="RHEA:14513"/>
        <dbReference type="Rhea" id="RHEA-COMP:9674"/>
        <dbReference type="Rhea" id="RHEA-COMP:9677"/>
        <dbReference type="ChEBI" id="CHEBI:15377"/>
        <dbReference type="ChEBI" id="CHEBI:15378"/>
        <dbReference type="ChEBI" id="CHEBI:29985"/>
        <dbReference type="ChEBI" id="CHEBI:30616"/>
        <dbReference type="ChEBI" id="CHEBI:43474"/>
        <dbReference type="ChEBI" id="CHEBI:58359"/>
        <dbReference type="ChEBI" id="CHEBI:78515"/>
        <dbReference type="ChEBI" id="CHEBI:78516"/>
        <dbReference type="ChEBI" id="CHEBI:456216"/>
    </reaction>
</comment>
<comment type="subunit">
    <text evidence="1">Heterotrimer of A, B and C subunits.</text>
</comment>
<comment type="similarity">
    <text evidence="1">Belongs to the GatB/GatE family. GatB subfamily.</text>
</comment>
<keyword id="KW-0067">ATP-binding</keyword>
<keyword id="KW-0436">Ligase</keyword>
<keyword id="KW-0547">Nucleotide-binding</keyword>
<keyword id="KW-0648">Protein biosynthesis</keyword>
<keyword id="KW-1185">Reference proteome</keyword>
<feature type="chain" id="PRO_1000016013" description="Aspartyl/glutamyl-tRNA(Asn/Gln) amidotransferase subunit B">
    <location>
        <begin position="1"/>
        <end position="486"/>
    </location>
</feature>
<proteinExistence type="inferred from homology"/>
<protein>
    <recommendedName>
        <fullName evidence="1">Aspartyl/glutamyl-tRNA(Asn/Gln) amidotransferase subunit B</fullName>
        <shortName evidence="1">Asp/Glu-ADT subunit B</shortName>
        <ecNumber evidence="1">6.3.5.-</ecNumber>
    </recommendedName>
</protein>
<name>GATB_ORITB</name>